<keyword id="KW-0025">Alternative splicing</keyword>
<keyword id="KW-0898">Cataract</keyword>
<keyword id="KW-0175">Coiled coil</keyword>
<keyword id="KW-0225">Disease variant</keyword>
<keyword id="KW-0496">Mitochondrion</keyword>
<keyword id="KW-1267">Proteomics identification</keyword>
<keyword id="KW-1185">Reference proteome</keyword>
<keyword id="KW-0716">Sensory transduction</keyword>
<keyword id="KW-0844">Vision</keyword>
<reference key="1">
    <citation type="journal article" date="2001" name="Am. J. Hum. Genet.">
        <title>Type III 3-methylglutaconic aciduria (optic atrophy plus syndrome, or Costeff optic atrophy syndrome): identification of the OPA3 gene and its founder mutation in Iraqi Jews.</title>
        <authorList>
            <person name="Anikster Y."/>
            <person name="Kleta R."/>
            <person name="Shaag A."/>
            <person name="Gahl W.A."/>
            <person name="Elpeleg O."/>
        </authorList>
    </citation>
    <scope>NUCLEOTIDE SEQUENCE [MRNA] (ISOFORM 1)</scope>
    <scope>INVOLVEMENT IN MGCA3</scope>
    <scope>TISSUE SPECIFICITY</scope>
</reference>
<reference key="2">
    <citation type="journal article" date="2004" name="Nat. Genet.">
        <title>Complete sequencing and characterization of 21,243 full-length human cDNAs.</title>
        <authorList>
            <person name="Ota T."/>
            <person name="Suzuki Y."/>
            <person name="Nishikawa T."/>
            <person name="Otsuki T."/>
            <person name="Sugiyama T."/>
            <person name="Irie R."/>
            <person name="Wakamatsu A."/>
            <person name="Hayashi K."/>
            <person name="Sato H."/>
            <person name="Nagai K."/>
            <person name="Kimura K."/>
            <person name="Makita H."/>
            <person name="Sekine M."/>
            <person name="Obayashi M."/>
            <person name="Nishi T."/>
            <person name="Shibahara T."/>
            <person name="Tanaka T."/>
            <person name="Ishii S."/>
            <person name="Yamamoto J."/>
            <person name="Saito K."/>
            <person name="Kawai Y."/>
            <person name="Isono Y."/>
            <person name="Nakamura Y."/>
            <person name="Nagahari K."/>
            <person name="Murakami K."/>
            <person name="Yasuda T."/>
            <person name="Iwayanagi T."/>
            <person name="Wagatsuma M."/>
            <person name="Shiratori A."/>
            <person name="Sudo H."/>
            <person name="Hosoiri T."/>
            <person name="Kaku Y."/>
            <person name="Kodaira H."/>
            <person name="Kondo H."/>
            <person name="Sugawara M."/>
            <person name="Takahashi M."/>
            <person name="Kanda K."/>
            <person name="Yokoi T."/>
            <person name="Furuya T."/>
            <person name="Kikkawa E."/>
            <person name="Omura Y."/>
            <person name="Abe K."/>
            <person name="Kamihara K."/>
            <person name="Katsuta N."/>
            <person name="Sato K."/>
            <person name="Tanikawa M."/>
            <person name="Yamazaki M."/>
            <person name="Ninomiya K."/>
            <person name="Ishibashi T."/>
            <person name="Yamashita H."/>
            <person name="Murakawa K."/>
            <person name="Fujimori K."/>
            <person name="Tanai H."/>
            <person name="Kimata M."/>
            <person name="Watanabe M."/>
            <person name="Hiraoka S."/>
            <person name="Chiba Y."/>
            <person name="Ishida S."/>
            <person name="Ono Y."/>
            <person name="Takiguchi S."/>
            <person name="Watanabe S."/>
            <person name="Yosida M."/>
            <person name="Hotuta T."/>
            <person name="Kusano J."/>
            <person name="Kanehori K."/>
            <person name="Takahashi-Fujii A."/>
            <person name="Hara H."/>
            <person name="Tanase T.-O."/>
            <person name="Nomura Y."/>
            <person name="Togiya S."/>
            <person name="Komai F."/>
            <person name="Hara R."/>
            <person name="Takeuchi K."/>
            <person name="Arita M."/>
            <person name="Imose N."/>
            <person name="Musashino K."/>
            <person name="Yuuki H."/>
            <person name="Oshima A."/>
            <person name="Sasaki N."/>
            <person name="Aotsuka S."/>
            <person name="Yoshikawa Y."/>
            <person name="Matsunawa H."/>
            <person name="Ichihara T."/>
            <person name="Shiohata N."/>
            <person name="Sano S."/>
            <person name="Moriya S."/>
            <person name="Momiyama H."/>
            <person name="Satoh N."/>
            <person name="Takami S."/>
            <person name="Terashima Y."/>
            <person name="Suzuki O."/>
            <person name="Nakagawa S."/>
            <person name="Senoh A."/>
            <person name="Mizoguchi H."/>
            <person name="Goto Y."/>
            <person name="Shimizu F."/>
            <person name="Wakebe H."/>
            <person name="Hishigaki H."/>
            <person name="Watanabe T."/>
            <person name="Sugiyama A."/>
            <person name="Takemoto M."/>
            <person name="Kawakami B."/>
            <person name="Yamazaki M."/>
            <person name="Watanabe K."/>
            <person name="Kumagai A."/>
            <person name="Itakura S."/>
            <person name="Fukuzumi Y."/>
            <person name="Fujimori Y."/>
            <person name="Komiyama M."/>
            <person name="Tashiro H."/>
            <person name="Tanigami A."/>
            <person name="Fujiwara T."/>
            <person name="Ono T."/>
            <person name="Yamada K."/>
            <person name="Fujii Y."/>
            <person name="Ozaki K."/>
            <person name="Hirao M."/>
            <person name="Ohmori Y."/>
            <person name="Kawabata A."/>
            <person name="Hikiji T."/>
            <person name="Kobatake N."/>
            <person name="Inagaki H."/>
            <person name="Ikema Y."/>
            <person name="Okamoto S."/>
            <person name="Okitani R."/>
            <person name="Kawakami T."/>
            <person name="Noguchi S."/>
            <person name="Itoh T."/>
            <person name="Shigeta K."/>
            <person name="Senba T."/>
            <person name="Matsumura K."/>
            <person name="Nakajima Y."/>
            <person name="Mizuno T."/>
            <person name="Morinaga M."/>
            <person name="Sasaki M."/>
            <person name="Togashi T."/>
            <person name="Oyama M."/>
            <person name="Hata H."/>
            <person name="Watanabe M."/>
            <person name="Komatsu T."/>
            <person name="Mizushima-Sugano J."/>
            <person name="Satoh T."/>
            <person name="Shirai Y."/>
            <person name="Takahashi Y."/>
            <person name="Nakagawa K."/>
            <person name="Okumura K."/>
            <person name="Nagase T."/>
            <person name="Nomura N."/>
            <person name="Kikuchi H."/>
            <person name="Masuho Y."/>
            <person name="Yamashita R."/>
            <person name="Nakai K."/>
            <person name="Yada T."/>
            <person name="Nakamura Y."/>
            <person name="Ohara O."/>
            <person name="Isogai T."/>
            <person name="Sugano S."/>
        </authorList>
    </citation>
    <scope>NUCLEOTIDE SEQUENCE [LARGE SCALE MRNA] (ISOFORMS 1 AND 2)</scope>
    <source>
        <tissue>Brain</tissue>
    </source>
</reference>
<reference key="3">
    <citation type="journal article" date="2004" name="Genome Res.">
        <title>The status, quality, and expansion of the NIH full-length cDNA project: the Mammalian Gene Collection (MGC).</title>
        <authorList>
            <consortium name="The MGC Project Team"/>
        </authorList>
    </citation>
    <scope>NUCLEOTIDE SEQUENCE [LARGE SCALE MRNA] (ISOFORMS 1 AND 2)</scope>
    <source>
        <tissue>Kidney</tissue>
        <tissue>Lung</tissue>
        <tissue>Testis</tissue>
    </source>
</reference>
<reference key="4">
    <citation type="journal article" date="2011" name="BMC Syst. Biol.">
        <title>Initial characterization of the human central proteome.</title>
        <authorList>
            <person name="Burkard T.R."/>
            <person name="Planyavsky M."/>
            <person name="Kaupe I."/>
            <person name="Breitwieser F.P."/>
            <person name="Buerckstuemmer T."/>
            <person name="Bennett K.L."/>
            <person name="Superti-Furga G."/>
            <person name="Colinge J."/>
        </authorList>
    </citation>
    <scope>IDENTIFICATION BY MASS SPECTROMETRY [LARGE SCALE ANALYSIS]</scope>
</reference>
<reference key="5">
    <citation type="journal article" date="2014" name="J. Proteomics">
        <title>An enzyme assisted RP-RPLC approach for in-depth analysis of human liver phosphoproteome.</title>
        <authorList>
            <person name="Bian Y."/>
            <person name="Song C."/>
            <person name="Cheng K."/>
            <person name="Dong M."/>
            <person name="Wang F."/>
            <person name="Huang J."/>
            <person name="Sun D."/>
            <person name="Wang L."/>
            <person name="Ye M."/>
            <person name="Zou H."/>
        </authorList>
    </citation>
    <scope>IDENTIFICATION BY MASS SPECTROMETRY [LARGE SCALE ANALYSIS]</scope>
    <source>
        <tissue>Liver</tissue>
    </source>
</reference>
<reference key="6">
    <citation type="journal article" date="2015" name="Proteomics">
        <title>N-terminome analysis of the human mitochondrial proteome.</title>
        <authorList>
            <person name="Vaca Jacome A.S."/>
            <person name="Rabilloud T."/>
            <person name="Schaeffer-Reiss C."/>
            <person name="Rompais M."/>
            <person name="Ayoub D."/>
            <person name="Lane L."/>
            <person name="Bairoch A."/>
            <person name="Van Dorsselaer A."/>
            <person name="Carapito C."/>
        </authorList>
    </citation>
    <scope>CLEAVAGE OF INITIATOR METHIONINE [LARGE SCALE ANALYSIS]</scope>
    <scope>IDENTIFICATION BY MASS SPECTROMETRY [LARGE SCALE ANALYSIS]</scope>
</reference>
<reference key="7">
    <citation type="journal article" date="2004" name="J. Med. Genet.">
        <title>OPA3 gene mutations responsible for autosomal dominant optic atrophy and cataract.</title>
        <authorList>
            <person name="Reynier P."/>
            <person name="Amati-Bonneau P."/>
            <person name="Verny C."/>
            <person name="Olichon A."/>
            <person name="Simard G."/>
            <person name="Guichet A."/>
            <person name="Bonnemains C."/>
            <person name="Malecaze F."/>
            <person name="Malinge M.C."/>
            <person name="Pelletier J.B."/>
            <person name="Calvas P."/>
            <person name="Dollfus H."/>
            <person name="Belenguer P."/>
            <person name="Malthiery Y."/>
            <person name="Lenaers G."/>
            <person name="Bonneau D."/>
        </authorList>
    </citation>
    <scope>VARIANTS OPA3 SER-93 AND GLU-105</scope>
</reference>
<reference key="8">
    <citation type="journal article" date="2020" name="Hum. Mol. Genet.">
        <title>Atonal homolog 7 (ATOH7) loss-of-function mutations in predominant bilateral optic nerve hypoplasia.</title>
        <authorList>
            <person name="Atac D."/>
            <person name="Koller S."/>
            <person name="Hanson J.V.M."/>
            <person name="Feil S."/>
            <person name="Tiwari A."/>
            <person name="Bahr A."/>
            <person name="Baehr L."/>
            <person name="Magyar I."/>
            <person name="Kottke R."/>
            <person name="Gerth-Kahlert C."/>
            <person name="Berger W."/>
        </authorList>
    </citation>
    <scope>VARIANT ARG-15</scope>
</reference>
<proteinExistence type="evidence at protein level"/>
<name>OPA3_HUMAN</name>
<organism>
    <name type="scientific">Homo sapiens</name>
    <name type="common">Human</name>
    <dbReference type="NCBI Taxonomy" id="9606"/>
    <lineage>
        <taxon>Eukaryota</taxon>
        <taxon>Metazoa</taxon>
        <taxon>Chordata</taxon>
        <taxon>Craniata</taxon>
        <taxon>Vertebrata</taxon>
        <taxon>Euteleostomi</taxon>
        <taxon>Mammalia</taxon>
        <taxon>Eutheria</taxon>
        <taxon>Euarchontoglires</taxon>
        <taxon>Primates</taxon>
        <taxon>Haplorrhini</taxon>
        <taxon>Catarrhini</taxon>
        <taxon>Hominidae</taxon>
        <taxon>Homo</taxon>
    </lineage>
</organism>
<sequence length="179" mass="19996">MVVGAFPMAKLLYLGIRQVSKPLANRIKEAARRSEFFKTYICLPPAQLYHWVEMRTKMRIMGFRGTVIKPLNEEAAAELGAELLGEATIFIVGGGCLVLEYWRHQAQQRHKEEEQRAAWNALRDEVGHLALALEALQAQVQAAPPQGALEELRTELQEVRAQLCNPGRSASHAVPASKK</sequence>
<accession>Q9H6K4</accession>
<accession>Q6P384</accession>
<accession>Q8N784</accession>
<protein>
    <recommendedName>
        <fullName>Optic atrophy 3 protein</fullName>
    </recommendedName>
</protein>
<evidence type="ECO:0000255" key="1"/>
<evidence type="ECO:0000269" key="2">
    <source>
    </source>
</evidence>
<evidence type="ECO:0000269" key="3">
    <source>
    </source>
</evidence>
<evidence type="ECO:0000269" key="4">
    <source>
    </source>
</evidence>
<evidence type="ECO:0000303" key="5">
    <source>
    </source>
</evidence>
<evidence type="ECO:0000303" key="6">
    <source>
    </source>
</evidence>
<evidence type="ECO:0000305" key="7"/>
<evidence type="ECO:0007744" key="8">
    <source>
    </source>
</evidence>
<gene>
    <name type="primary">OPA3</name>
</gene>
<feature type="initiator methionine" description="Removed" evidence="8">
    <location>
        <position position="1"/>
    </location>
</feature>
<feature type="chain" id="PRO_0000220763" description="Optic atrophy 3 protein">
    <location>
        <begin position="2"/>
        <end position="179"/>
    </location>
</feature>
<feature type="coiled-coil region" evidence="1">
    <location>
        <begin position="103"/>
        <end position="163"/>
    </location>
</feature>
<feature type="splice variant" id="VSP_032681" description="In isoform 2." evidence="5 6">
    <original>VEMRTKMRIMGFRGTVIKPLNEEAAAELGAELLGEATIFIVGGGCLVLEYWRHQAQQRHKEEEQRAAWNALRDEVGHLALALEALQAQVQAAPPQGALEELRTELQEVRAQLCNPGRSASHAVPASKK</original>
    <variation>LEMRTKMRIMGFNAAAIKPLNEGAAAELGAELLGEGIIFITACSCLMLEYWRHQLQQRRKEKERRVAREALRGEVGHLGLALEELQAQVQATSTQLALEELRAQLQEVRAHLCLRDPPPAPPVAPASEK</variation>
    <location>
        <begin position="52"/>
        <end position="179"/>
    </location>
</feature>
<feature type="sequence variant" id="VAR_085736" description="Found in a family with foveal hypoplasia; uncertain significance; dbSNP:rs771522612." evidence="4">
    <original>G</original>
    <variation>R</variation>
    <location>
        <position position="15"/>
    </location>
</feature>
<feature type="sequence variant" id="VAR_033103" description="In OPA3; dbSNP:rs80356524." evidence="3">
    <original>G</original>
    <variation>S</variation>
    <location>
        <position position="93"/>
    </location>
</feature>
<feature type="sequence variant" id="VAR_033104" description="In OPA3; dbSNP:rs80356525." evidence="3">
    <original>Q</original>
    <variation>E</variation>
    <location>
        <position position="105"/>
    </location>
</feature>
<feature type="sequence conflict" description="In Ref. 2; BAC05415." evidence="7" ref="2">
    <original>G</original>
    <variation>E</variation>
    <location sequence="Q9H6K4-2">
        <position position="130"/>
    </location>
</feature>
<dbReference type="EMBL" id="AK025840">
    <property type="protein sequence ID" value="BAB15255.1"/>
    <property type="molecule type" value="mRNA"/>
</dbReference>
<dbReference type="EMBL" id="AK098798">
    <property type="protein sequence ID" value="BAC05415.1"/>
    <property type="molecule type" value="mRNA"/>
</dbReference>
<dbReference type="EMBL" id="BC005059">
    <property type="protein sequence ID" value="AAH05059.1"/>
    <property type="molecule type" value="mRNA"/>
</dbReference>
<dbReference type="EMBL" id="BC047316">
    <property type="protein sequence ID" value="AAH47316.1"/>
    <property type="molecule type" value="mRNA"/>
</dbReference>
<dbReference type="EMBL" id="BC064146">
    <property type="protein sequence ID" value="AAH64146.1"/>
    <property type="molecule type" value="mRNA"/>
</dbReference>
<dbReference type="CCDS" id="CCDS12668.1">
    <molecule id="Q9H6K4-1"/>
</dbReference>
<dbReference type="CCDS" id="CCDS33052.1">
    <molecule id="Q9H6K4-2"/>
</dbReference>
<dbReference type="RefSeq" id="NP_001017989.2">
    <molecule id="Q9H6K4-2"/>
    <property type="nucleotide sequence ID" value="NM_001017989.3"/>
</dbReference>
<dbReference type="RefSeq" id="NP_079412.1">
    <molecule id="Q9H6K4-1"/>
    <property type="nucleotide sequence ID" value="NM_025136.4"/>
</dbReference>
<dbReference type="SMR" id="Q9H6K4"/>
<dbReference type="BioGRID" id="123176">
    <property type="interactions" value="46"/>
</dbReference>
<dbReference type="FunCoup" id="Q9H6K4">
    <property type="interactions" value="946"/>
</dbReference>
<dbReference type="IntAct" id="Q9H6K4">
    <property type="interactions" value="98"/>
</dbReference>
<dbReference type="MINT" id="Q9H6K4"/>
<dbReference type="GlyGen" id="Q9H6K4">
    <property type="glycosylation" value="1 site, 1 O-linked glycan (1 site)"/>
</dbReference>
<dbReference type="iPTMnet" id="Q9H6K4"/>
<dbReference type="PhosphoSitePlus" id="Q9H6K4"/>
<dbReference type="BioMuta" id="OPA3"/>
<dbReference type="DMDM" id="20139177"/>
<dbReference type="jPOST" id="Q9H6K4"/>
<dbReference type="MassIVE" id="Q9H6K4"/>
<dbReference type="PeptideAtlas" id="Q9H6K4"/>
<dbReference type="ProteomicsDB" id="80995">
    <molecule id="Q9H6K4-1"/>
</dbReference>
<dbReference type="ProteomicsDB" id="80996">
    <molecule id="Q9H6K4-2"/>
</dbReference>
<dbReference type="Pumba" id="Q9H6K4"/>
<dbReference type="TopDownProteomics" id="Q9H6K4-1">
    <molecule id="Q9H6K4-1"/>
</dbReference>
<dbReference type="Antibodypedia" id="31359">
    <property type="antibodies" value="206 antibodies from 26 providers"/>
</dbReference>
<dbReference type="DNASU" id="80207"/>
<dbReference type="Ensembl" id="ENST00000263275.5">
    <molecule id="Q9H6K4-1"/>
    <property type="protein sequence ID" value="ENSP00000263275.4"/>
    <property type="gene ID" value="ENSG00000125741.6"/>
</dbReference>
<dbReference type="Ensembl" id="ENST00000323060.4">
    <molecule id="Q9H6K4-2"/>
    <property type="protein sequence ID" value="ENSP00000319817.3"/>
    <property type="gene ID" value="ENSG00000125741.6"/>
</dbReference>
<dbReference type="GeneID" id="80207"/>
<dbReference type="KEGG" id="hsa:80207"/>
<dbReference type="MANE-Select" id="ENST00000263275.5">
    <property type="protein sequence ID" value="ENSP00000263275.4"/>
    <property type="RefSeq nucleotide sequence ID" value="NM_025136.4"/>
    <property type="RefSeq protein sequence ID" value="NP_079412.1"/>
</dbReference>
<dbReference type="UCSC" id="uc002pcj.5">
    <molecule id="Q9H6K4-1"/>
    <property type="organism name" value="human"/>
</dbReference>
<dbReference type="AGR" id="HGNC:8142"/>
<dbReference type="CTD" id="80207"/>
<dbReference type="DisGeNET" id="80207"/>
<dbReference type="GeneCards" id="OPA3"/>
<dbReference type="GeneReviews" id="OPA3"/>
<dbReference type="HGNC" id="HGNC:8142">
    <property type="gene designation" value="OPA3"/>
</dbReference>
<dbReference type="HPA" id="ENSG00000125741">
    <property type="expression patterns" value="Low tissue specificity"/>
</dbReference>
<dbReference type="MalaCards" id="OPA3"/>
<dbReference type="MIM" id="165300">
    <property type="type" value="phenotype"/>
</dbReference>
<dbReference type="MIM" id="258501">
    <property type="type" value="phenotype"/>
</dbReference>
<dbReference type="MIM" id="606580">
    <property type="type" value="gene"/>
</dbReference>
<dbReference type="neXtProt" id="NX_Q9H6K4"/>
<dbReference type="OpenTargets" id="ENSG00000125741"/>
<dbReference type="Orphanet" id="67047">
    <property type="disease" value="3-methylglutaconic aciduria type 3"/>
</dbReference>
<dbReference type="Orphanet" id="67036">
    <property type="disease" value="Autosomal dominant optic atrophy and cataract"/>
</dbReference>
<dbReference type="PharmGKB" id="PA31929"/>
<dbReference type="VEuPathDB" id="HostDB:ENSG00000125741"/>
<dbReference type="GeneTree" id="ENSGT00390000009795"/>
<dbReference type="HOGENOM" id="CLU_074707_5_1_1"/>
<dbReference type="InParanoid" id="Q9H6K4"/>
<dbReference type="OMA" id="WAEFEGT"/>
<dbReference type="OrthoDB" id="2129069at2759"/>
<dbReference type="PAN-GO" id="Q9H6K4">
    <property type="GO annotations" value="2 GO annotations based on evolutionary models"/>
</dbReference>
<dbReference type="PhylomeDB" id="Q9H6K4"/>
<dbReference type="TreeFam" id="TF314653"/>
<dbReference type="PathwayCommons" id="Q9H6K4"/>
<dbReference type="SignaLink" id="Q9H6K4"/>
<dbReference type="SIGNOR" id="Q9H6K4"/>
<dbReference type="BioGRID-ORCS" id="80207">
    <property type="hits" value="15 hits in 1152 CRISPR screens"/>
</dbReference>
<dbReference type="ChiTaRS" id="OPA3">
    <property type="organism name" value="human"/>
</dbReference>
<dbReference type="GeneWiki" id="OPA3"/>
<dbReference type="GenomeRNAi" id="80207"/>
<dbReference type="Pharos" id="Q9H6K4">
    <property type="development level" value="Tbio"/>
</dbReference>
<dbReference type="PRO" id="PR:Q9H6K4"/>
<dbReference type="Proteomes" id="UP000005640">
    <property type="component" value="Chromosome 19"/>
</dbReference>
<dbReference type="RNAct" id="Q9H6K4">
    <property type="molecule type" value="protein"/>
</dbReference>
<dbReference type="Bgee" id="ENSG00000125741">
    <property type="expression patterns" value="Expressed in tendon of biceps brachii and 136 other cell types or tissues"/>
</dbReference>
<dbReference type="ExpressionAtlas" id="Q9H6K4">
    <property type="expression patterns" value="baseline and differential"/>
</dbReference>
<dbReference type="GO" id="GO:0005739">
    <property type="term" value="C:mitochondrion"/>
    <property type="evidence" value="ECO:0000314"/>
    <property type="project" value="LIFEdb"/>
</dbReference>
<dbReference type="GO" id="GO:0060348">
    <property type="term" value="P:bone development"/>
    <property type="evidence" value="ECO:0007669"/>
    <property type="project" value="Ensembl"/>
</dbReference>
<dbReference type="GO" id="GO:0045444">
    <property type="term" value="P:fat cell differentiation"/>
    <property type="evidence" value="ECO:0007669"/>
    <property type="project" value="Ensembl"/>
</dbReference>
<dbReference type="GO" id="GO:0007005">
    <property type="term" value="P:mitochondrion organization"/>
    <property type="evidence" value="ECO:0007669"/>
    <property type="project" value="Ensembl"/>
</dbReference>
<dbReference type="GO" id="GO:0050905">
    <property type="term" value="P:neuromuscular process"/>
    <property type="evidence" value="ECO:0007669"/>
    <property type="project" value="Ensembl"/>
</dbReference>
<dbReference type="GO" id="GO:0040008">
    <property type="term" value="P:regulation of growth"/>
    <property type="evidence" value="ECO:0007669"/>
    <property type="project" value="Ensembl"/>
</dbReference>
<dbReference type="GO" id="GO:0019216">
    <property type="term" value="P:regulation of lipid metabolic process"/>
    <property type="evidence" value="ECO:0000318"/>
    <property type="project" value="GO_Central"/>
</dbReference>
<dbReference type="GO" id="GO:0007601">
    <property type="term" value="P:visual perception"/>
    <property type="evidence" value="ECO:0000315"/>
    <property type="project" value="UniProtKB"/>
</dbReference>
<dbReference type="InterPro" id="IPR010754">
    <property type="entry name" value="OPA3-like"/>
</dbReference>
<dbReference type="PANTHER" id="PTHR12499:SF0">
    <property type="entry name" value="OPTIC ATROPHY 3 PROTEIN"/>
    <property type="match status" value="1"/>
</dbReference>
<dbReference type="PANTHER" id="PTHR12499">
    <property type="entry name" value="OPTIC ATROPHY 3 PROTEIN OPA3"/>
    <property type="match status" value="1"/>
</dbReference>
<dbReference type="Pfam" id="PF07047">
    <property type="entry name" value="OPA3"/>
    <property type="match status" value="1"/>
</dbReference>
<comment type="function">
    <text>May play some role in mitochondrial processes.</text>
</comment>
<comment type="subcellular location">
    <subcellularLocation>
        <location evidence="7">Mitochondrion</location>
    </subcellularLocation>
</comment>
<comment type="alternative products">
    <event type="alternative splicing"/>
    <isoform>
        <id>Q9H6K4-1</id>
        <name>1</name>
        <sequence type="displayed"/>
    </isoform>
    <isoform>
        <id>Q9H6K4-2</id>
        <name>2</name>
        <sequence type="described" ref="VSP_032681"/>
    </isoform>
    <text>The two isoforms share the first coding exon and than differ due to a duplicated alternative second coding exon.</text>
</comment>
<comment type="tissue specificity">
    <text evidence="2">Ubiquitous. Most prominent expression in skeletal muscle and kidney.</text>
</comment>
<comment type="disease" evidence="2">
    <disease id="DI-00006">
        <name>3-methylglutaconic aciduria 3</name>
        <acronym>MGCA3</acronym>
        <description>An autosomal recessive metabolic disorder that causes a neuro-ophthalmologic syndrome consisting of early-onset bilateral optic atrophy, spasticity, extrapyramidal dysfunction and cognitive deficit. Urinary excretion of 3-methylglutaconic acid and 3-methylglutaric acid is increased. MGCA3 can be distinguished from MGCA1 by the absence of increase of 3-hydroxyisovaleric acid levels.</description>
        <dbReference type="MIM" id="258501"/>
    </disease>
    <text>The disease is caused by variants affecting the gene represented in this entry.</text>
</comment>
<comment type="disease" evidence="3">
    <disease id="DI-02098">
        <name>Optic atrophy 3</name>
        <acronym>OPA3</acronym>
        <description>A condition that features progressive visual loss in association with optic atrophy. Atrophy of the optic disk indicates a deficiency in the number of nerve fibers which arise in the retina and converge to form the optic disk, optic nerve, optic chiasm and optic tracts. OPA3 is associated with cataract and a neurologic disorder characterized by extrapyramidal signs and ataxia.</description>
        <dbReference type="MIM" id="165300"/>
    </disease>
    <text>The disease is caused by variants affecting the gene represented in this entry.</text>
</comment>
<comment type="similarity">
    <text evidence="7">Belongs to the OPA3 family.</text>
</comment>